<geneLocation type="chloroplast"/>
<organism>
    <name type="scientific">Nepenthes gracilis</name>
    <name type="common">Slender pitcher plant</name>
    <dbReference type="NCBI Taxonomy" id="150966"/>
    <lineage>
        <taxon>Eukaryota</taxon>
        <taxon>Viridiplantae</taxon>
        <taxon>Streptophyta</taxon>
        <taxon>Embryophyta</taxon>
        <taxon>Tracheophyta</taxon>
        <taxon>Spermatophyta</taxon>
        <taxon>Magnoliopsida</taxon>
        <taxon>eudicotyledons</taxon>
        <taxon>Gunneridae</taxon>
        <taxon>Pentapetalae</taxon>
        <taxon>Caryophyllales</taxon>
        <taxon>Nepenthaceae</taxon>
        <taxon>Nepenthes</taxon>
    </lineage>
</organism>
<comment type="function">
    <text evidence="1">Usually encoded in the trnK tRNA gene intron. Probably assists in splicing its own and other chloroplast group II introns.</text>
</comment>
<comment type="subcellular location">
    <subcellularLocation>
        <location>Plastid</location>
        <location>Chloroplast</location>
    </subcellularLocation>
</comment>
<comment type="similarity">
    <text evidence="1">Belongs to the intron maturase 2 family. MatK subfamily.</text>
</comment>
<dbReference type="EMBL" id="AF315937">
    <property type="protein sequence ID" value="AAK56068.1"/>
    <property type="molecule type" value="Genomic_DNA"/>
</dbReference>
<dbReference type="GO" id="GO:0009507">
    <property type="term" value="C:chloroplast"/>
    <property type="evidence" value="ECO:0007669"/>
    <property type="project" value="UniProtKB-SubCell"/>
</dbReference>
<dbReference type="GO" id="GO:0003723">
    <property type="term" value="F:RNA binding"/>
    <property type="evidence" value="ECO:0007669"/>
    <property type="project" value="UniProtKB-KW"/>
</dbReference>
<dbReference type="GO" id="GO:0006397">
    <property type="term" value="P:mRNA processing"/>
    <property type="evidence" value="ECO:0007669"/>
    <property type="project" value="UniProtKB-KW"/>
</dbReference>
<dbReference type="GO" id="GO:0008380">
    <property type="term" value="P:RNA splicing"/>
    <property type="evidence" value="ECO:0007669"/>
    <property type="project" value="UniProtKB-UniRule"/>
</dbReference>
<dbReference type="GO" id="GO:0008033">
    <property type="term" value="P:tRNA processing"/>
    <property type="evidence" value="ECO:0007669"/>
    <property type="project" value="UniProtKB-KW"/>
</dbReference>
<dbReference type="HAMAP" id="MF_01390">
    <property type="entry name" value="MatK"/>
    <property type="match status" value="1"/>
</dbReference>
<dbReference type="InterPro" id="IPR024937">
    <property type="entry name" value="Domain_X"/>
</dbReference>
<dbReference type="InterPro" id="IPR002866">
    <property type="entry name" value="Maturase_MatK"/>
</dbReference>
<dbReference type="InterPro" id="IPR024942">
    <property type="entry name" value="Maturase_MatK_N"/>
</dbReference>
<dbReference type="PANTHER" id="PTHR34811">
    <property type="entry name" value="MATURASE K"/>
    <property type="match status" value="1"/>
</dbReference>
<dbReference type="PANTHER" id="PTHR34811:SF1">
    <property type="entry name" value="MATURASE K"/>
    <property type="match status" value="1"/>
</dbReference>
<dbReference type="Pfam" id="PF01348">
    <property type="entry name" value="Intron_maturas2"/>
    <property type="match status" value="1"/>
</dbReference>
<dbReference type="Pfam" id="PF01824">
    <property type="entry name" value="MatK_N"/>
    <property type="match status" value="1"/>
</dbReference>
<keyword id="KW-0150">Chloroplast</keyword>
<keyword id="KW-0507">mRNA processing</keyword>
<keyword id="KW-0934">Plastid</keyword>
<keyword id="KW-0694">RNA-binding</keyword>
<keyword id="KW-0819">tRNA processing</keyword>
<evidence type="ECO:0000255" key="1">
    <source>
        <dbReference type="HAMAP-Rule" id="MF_01390"/>
    </source>
</evidence>
<protein>
    <recommendedName>
        <fullName evidence="1">Maturase K</fullName>
    </recommendedName>
    <alternativeName>
        <fullName evidence="1">Intron maturase</fullName>
    </alternativeName>
</protein>
<proteinExistence type="inferred from homology"/>
<accession>Q94Q55</accession>
<reference key="1">
    <citation type="journal article" date="2001" name="Plant Biol.">
        <title>Molecular phylogeny of Nepenthaceae based on cladistic analysis of plastid trnK intron sequence data.</title>
        <authorList>
            <person name="Meimberg H."/>
            <person name="Dittrich P."/>
            <person name="Heubl G."/>
        </authorList>
    </citation>
    <scope>NUCLEOTIDE SEQUENCE [GENOMIC DNA]</scope>
</reference>
<feature type="chain" id="PRO_0000143533" description="Maturase K">
    <location>
        <begin position="1"/>
        <end position="504"/>
    </location>
</feature>
<name>MATK_NEPGR</name>
<sequence length="504" mass="60747">MEELRGYLELDRSWQRDFLYTLILQEYIYSLAHDHGFNRTIFLENAGYEKKYSFLIVKRLITRMYQQNHLILSANDSNQNEFWGQKKNLYYQVISEGFAFIVEIPFSLQLLFSLEGKEIVKSRNLRSIHSIFPFLEDKFSHLNYVLDILIPHPVHLEILVQTIRYWTKDASSLHLLRFFLYEYRNWNSRISIKQYISFFSNRNQRLFLFLYNSHVCEYESIFIFLRNQPSHLRSTFSGAFLERIHFYEKMEHLVKVFTKNFQVILWFFKDTFMHYVRYQGKSFVASKGTSLLMIKWKYYLVNFWQCYFSVWSQPRRIYINQLSNHSLDFMGFLSSVRLNPSVVRIQMFEKSFIIDNAINTFDTLVPNIPMIGSFAKEKFCNIFGHPISKPVWADLSDSDIIDRFGRICRSLSHYYSGSSRKKSLYRIKYILRISCARTLARKHKSTVRTFLKRLGSEFLEEFFMEEEKVLSLILPRDSYTSQRFYRGRIWYLDIFCIHDLANHE</sequence>
<gene>
    <name evidence="1" type="primary">matK</name>
</gene>